<accession>A5I348</accession>
<accession>A7G4K8</accession>
<gene>
    <name evidence="1" type="primary">msrA</name>
    <name type="ordered locus">CBO1923</name>
    <name type="ordered locus">CLC_1868</name>
</gene>
<evidence type="ECO:0000255" key="1">
    <source>
        <dbReference type="HAMAP-Rule" id="MF_01401"/>
    </source>
</evidence>
<comment type="function">
    <text evidence="1">Has an important function as a repair enzyme for proteins that have been inactivated by oxidation. Catalyzes the reversible oxidation-reduction of methionine sulfoxide in proteins to methionine.</text>
</comment>
<comment type="catalytic activity">
    <reaction evidence="1">
        <text>L-methionyl-[protein] + [thioredoxin]-disulfide + H2O = L-methionyl-(S)-S-oxide-[protein] + [thioredoxin]-dithiol</text>
        <dbReference type="Rhea" id="RHEA:14217"/>
        <dbReference type="Rhea" id="RHEA-COMP:10698"/>
        <dbReference type="Rhea" id="RHEA-COMP:10700"/>
        <dbReference type="Rhea" id="RHEA-COMP:12313"/>
        <dbReference type="Rhea" id="RHEA-COMP:12315"/>
        <dbReference type="ChEBI" id="CHEBI:15377"/>
        <dbReference type="ChEBI" id="CHEBI:16044"/>
        <dbReference type="ChEBI" id="CHEBI:29950"/>
        <dbReference type="ChEBI" id="CHEBI:44120"/>
        <dbReference type="ChEBI" id="CHEBI:50058"/>
        <dbReference type="EC" id="1.8.4.11"/>
    </reaction>
</comment>
<comment type="catalytic activity">
    <reaction evidence="1">
        <text>[thioredoxin]-disulfide + L-methionine + H2O = L-methionine (S)-S-oxide + [thioredoxin]-dithiol</text>
        <dbReference type="Rhea" id="RHEA:19993"/>
        <dbReference type="Rhea" id="RHEA-COMP:10698"/>
        <dbReference type="Rhea" id="RHEA-COMP:10700"/>
        <dbReference type="ChEBI" id="CHEBI:15377"/>
        <dbReference type="ChEBI" id="CHEBI:29950"/>
        <dbReference type="ChEBI" id="CHEBI:50058"/>
        <dbReference type="ChEBI" id="CHEBI:57844"/>
        <dbReference type="ChEBI" id="CHEBI:58772"/>
        <dbReference type="EC" id="1.8.4.11"/>
    </reaction>
</comment>
<comment type="similarity">
    <text evidence="1">Belongs to the MsrA Met sulfoxide reductase family.</text>
</comment>
<organism>
    <name type="scientific">Clostridium botulinum (strain Hall / ATCC 3502 / NCTC 13319 / Type A)</name>
    <dbReference type="NCBI Taxonomy" id="441771"/>
    <lineage>
        <taxon>Bacteria</taxon>
        <taxon>Bacillati</taxon>
        <taxon>Bacillota</taxon>
        <taxon>Clostridia</taxon>
        <taxon>Eubacteriales</taxon>
        <taxon>Clostridiaceae</taxon>
        <taxon>Clostridium</taxon>
    </lineage>
</organism>
<keyword id="KW-0560">Oxidoreductase</keyword>
<keyword id="KW-1185">Reference proteome</keyword>
<reference key="1">
    <citation type="journal article" date="2007" name="Genome Res.">
        <title>Genome sequence of a proteolytic (Group I) Clostridium botulinum strain Hall A and comparative analysis of the clostridial genomes.</title>
        <authorList>
            <person name="Sebaihia M."/>
            <person name="Peck M.W."/>
            <person name="Minton N.P."/>
            <person name="Thomson N.R."/>
            <person name="Holden M.T.G."/>
            <person name="Mitchell W.J."/>
            <person name="Carter A.T."/>
            <person name="Bentley S.D."/>
            <person name="Mason D.R."/>
            <person name="Crossman L."/>
            <person name="Paul C.J."/>
            <person name="Ivens A."/>
            <person name="Wells-Bennik M.H.J."/>
            <person name="Davis I.J."/>
            <person name="Cerdeno-Tarraga A.M."/>
            <person name="Churcher C."/>
            <person name="Quail M.A."/>
            <person name="Chillingworth T."/>
            <person name="Feltwell T."/>
            <person name="Fraser A."/>
            <person name="Goodhead I."/>
            <person name="Hance Z."/>
            <person name="Jagels K."/>
            <person name="Larke N."/>
            <person name="Maddison M."/>
            <person name="Moule S."/>
            <person name="Mungall K."/>
            <person name="Norbertczak H."/>
            <person name="Rabbinowitsch E."/>
            <person name="Sanders M."/>
            <person name="Simmonds M."/>
            <person name="White B."/>
            <person name="Whithead S."/>
            <person name="Parkhill J."/>
        </authorList>
    </citation>
    <scope>NUCLEOTIDE SEQUENCE [LARGE SCALE GENOMIC DNA]</scope>
    <source>
        <strain>Hall / ATCC 3502 / NCTC 13319 / Type A</strain>
    </source>
</reference>
<reference key="2">
    <citation type="journal article" date="2007" name="PLoS ONE">
        <title>Analysis of the neurotoxin complex genes in Clostridium botulinum A1-A4 and B1 strains: BoNT/A3, /Ba4 and /B1 clusters are located within plasmids.</title>
        <authorList>
            <person name="Smith T.J."/>
            <person name="Hill K.K."/>
            <person name="Foley B.T."/>
            <person name="Detter J.C."/>
            <person name="Munk A.C."/>
            <person name="Bruce D.C."/>
            <person name="Doggett N.A."/>
            <person name="Smith L.A."/>
            <person name="Marks J.D."/>
            <person name="Xie G."/>
            <person name="Brettin T.S."/>
        </authorList>
    </citation>
    <scope>NUCLEOTIDE SEQUENCE [LARGE SCALE GENOMIC DNA]</scope>
    <source>
        <strain>Hall / ATCC 3502 / NCTC 13319 / Type A</strain>
    </source>
</reference>
<proteinExistence type="inferred from homology"/>
<protein>
    <recommendedName>
        <fullName evidence="1">Peptide methionine sulfoxide reductase MsrA</fullName>
        <shortName evidence="1">Protein-methionine-S-oxide reductase</shortName>
        <ecNumber evidence="1">1.8.4.11</ecNumber>
    </recommendedName>
    <alternativeName>
        <fullName evidence="1">Peptide-methionine (S)-S-oxide reductase</fullName>
        <shortName evidence="1">Peptide Met(O) reductase</shortName>
    </alternativeName>
</protein>
<feature type="chain" id="PRO_1000068319" description="Peptide methionine sulfoxide reductase MsrA">
    <location>
        <begin position="1"/>
        <end position="157"/>
    </location>
</feature>
<feature type="active site" evidence="1">
    <location>
        <position position="10"/>
    </location>
</feature>
<sequence length="157" mass="18178">MKEIVLAGGCFWGVEEYMSRIEGIVETKVGYANGIKENPSYEEVCSGVTGHAEACYIKYDESIISLEELLNKFWSIIDPTVLNKQGNDRGTQYRTGIFYLDEKDLNVIIKSKYQEQKNYRKPIVTEVEPLKCFYEAEEYHQKYLKKNPGGYCHIHLD</sequence>
<dbReference type="EC" id="1.8.4.11" evidence="1"/>
<dbReference type="EMBL" id="CP000727">
    <property type="protein sequence ID" value="ABS38947.1"/>
    <property type="molecule type" value="Genomic_DNA"/>
</dbReference>
<dbReference type="EMBL" id="AM412317">
    <property type="protein sequence ID" value="CAL83465.1"/>
    <property type="molecule type" value="Genomic_DNA"/>
</dbReference>
<dbReference type="RefSeq" id="WP_011986464.1">
    <property type="nucleotide sequence ID" value="NC_009698.1"/>
</dbReference>
<dbReference type="RefSeq" id="YP_001254426.1">
    <property type="nucleotide sequence ID" value="NC_009495.1"/>
</dbReference>
<dbReference type="RefSeq" id="YP_001387723.1">
    <property type="nucleotide sequence ID" value="NC_009698.1"/>
</dbReference>
<dbReference type="SMR" id="A5I348"/>
<dbReference type="GeneID" id="5186178"/>
<dbReference type="KEGG" id="cbh:CLC_1868"/>
<dbReference type="KEGG" id="cbo:CBO1923"/>
<dbReference type="PATRIC" id="fig|413999.7.peg.1895"/>
<dbReference type="HOGENOM" id="CLU_031040_10_2_9"/>
<dbReference type="PRO" id="PR:A5I348"/>
<dbReference type="Proteomes" id="UP000001986">
    <property type="component" value="Chromosome"/>
</dbReference>
<dbReference type="GO" id="GO:0005737">
    <property type="term" value="C:cytoplasm"/>
    <property type="evidence" value="ECO:0000318"/>
    <property type="project" value="GO_Central"/>
</dbReference>
<dbReference type="GO" id="GO:0036456">
    <property type="term" value="F:L-methionine-(S)-S-oxide reductase activity"/>
    <property type="evidence" value="ECO:0000318"/>
    <property type="project" value="GO_Central"/>
</dbReference>
<dbReference type="GO" id="GO:0008113">
    <property type="term" value="F:peptide-methionine (S)-S-oxide reductase activity"/>
    <property type="evidence" value="ECO:0000318"/>
    <property type="project" value="GO_Central"/>
</dbReference>
<dbReference type="GO" id="GO:0034599">
    <property type="term" value="P:cellular response to oxidative stress"/>
    <property type="evidence" value="ECO:0000318"/>
    <property type="project" value="GO_Central"/>
</dbReference>
<dbReference type="GO" id="GO:0036211">
    <property type="term" value="P:protein modification process"/>
    <property type="evidence" value="ECO:0007669"/>
    <property type="project" value="UniProtKB-UniRule"/>
</dbReference>
<dbReference type="FunFam" id="3.30.1060.10:FF:000010">
    <property type="entry name" value="Peptide methionine sulfoxide reductase msrA"/>
    <property type="match status" value="1"/>
</dbReference>
<dbReference type="Gene3D" id="3.30.1060.10">
    <property type="entry name" value="Peptide methionine sulphoxide reductase MsrA"/>
    <property type="match status" value="1"/>
</dbReference>
<dbReference type="HAMAP" id="MF_01401">
    <property type="entry name" value="MsrA"/>
    <property type="match status" value="1"/>
</dbReference>
<dbReference type="InterPro" id="IPR002569">
    <property type="entry name" value="Met_Sox_Rdtase_MsrA_dom"/>
</dbReference>
<dbReference type="InterPro" id="IPR036509">
    <property type="entry name" value="Met_Sox_Rdtase_MsrA_sf"/>
</dbReference>
<dbReference type="InterPro" id="IPR050162">
    <property type="entry name" value="MsrA_MetSO_reductase"/>
</dbReference>
<dbReference type="NCBIfam" id="TIGR00401">
    <property type="entry name" value="msrA"/>
    <property type="match status" value="1"/>
</dbReference>
<dbReference type="PANTHER" id="PTHR42799">
    <property type="entry name" value="MITOCHONDRIAL PEPTIDE METHIONINE SULFOXIDE REDUCTASE"/>
    <property type="match status" value="1"/>
</dbReference>
<dbReference type="PANTHER" id="PTHR42799:SF2">
    <property type="entry name" value="MITOCHONDRIAL PEPTIDE METHIONINE SULFOXIDE REDUCTASE"/>
    <property type="match status" value="1"/>
</dbReference>
<dbReference type="Pfam" id="PF01625">
    <property type="entry name" value="PMSR"/>
    <property type="match status" value="1"/>
</dbReference>
<dbReference type="SUPFAM" id="SSF55068">
    <property type="entry name" value="Peptide methionine sulfoxide reductase"/>
    <property type="match status" value="1"/>
</dbReference>
<name>MSRA_CLOBH</name>